<name>RK16_ATRBE</name>
<reference key="1">
    <citation type="journal article" date="2002" name="Mol. Biol. Evol.">
        <title>The plastid chromosome of Atropa belladonna and its comparison with that of Nicotiana tabacum: the role of RNA editing in generating divergence in the process of plant speciation.</title>
        <authorList>
            <person name="Schmitz-Linneweber C."/>
            <person name="Regel R."/>
            <person name="Du T.G."/>
            <person name="Hupfer H."/>
            <person name="Herrmann R.G."/>
            <person name="Maier R.M."/>
        </authorList>
    </citation>
    <scope>NUCLEOTIDE SEQUENCE [LARGE SCALE GENOMIC DNA]</scope>
    <source>
        <strain>cv. Ab5p(kan)</strain>
    </source>
</reference>
<gene>
    <name evidence="1" type="primary">rpl16</name>
</gene>
<geneLocation type="chloroplast"/>
<organism>
    <name type="scientific">Atropa belladonna</name>
    <name type="common">Belladonna</name>
    <name type="synonym">Deadly nightshade</name>
    <dbReference type="NCBI Taxonomy" id="33113"/>
    <lineage>
        <taxon>Eukaryota</taxon>
        <taxon>Viridiplantae</taxon>
        <taxon>Streptophyta</taxon>
        <taxon>Embryophyta</taxon>
        <taxon>Tracheophyta</taxon>
        <taxon>Spermatophyta</taxon>
        <taxon>Magnoliopsida</taxon>
        <taxon>eudicotyledons</taxon>
        <taxon>Gunneridae</taxon>
        <taxon>Pentapetalae</taxon>
        <taxon>asterids</taxon>
        <taxon>lamiids</taxon>
        <taxon>Solanales</taxon>
        <taxon>Solanaceae</taxon>
        <taxon>Solanoideae</taxon>
        <taxon>Hyoscyameae</taxon>
        <taxon>Atropa</taxon>
    </lineage>
</organism>
<proteinExistence type="inferred from homology"/>
<comment type="subunit">
    <text evidence="1">Part of the 50S ribosomal subunit.</text>
</comment>
<comment type="subcellular location">
    <subcellularLocation>
        <location>Plastid</location>
        <location>Chloroplast</location>
    </subcellularLocation>
</comment>
<comment type="similarity">
    <text evidence="1">Belongs to the universal ribosomal protein uL16 family.</text>
</comment>
<feature type="chain" id="PRO_0000062270" description="Large ribosomal subunit protein uL16c">
    <location>
        <begin position="1"/>
        <end position="134"/>
    </location>
</feature>
<evidence type="ECO:0000255" key="1">
    <source>
        <dbReference type="HAMAP-Rule" id="MF_01342"/>
    </source>
</evidence>
<evidence type="ECO:0000305" key="2"/>
<sequence>MLSPKRTRFRKQHRGRMKGISYRGNHISFGKYALQALEPAWITSRQIEAGRRAMTRNARRGGKIWVRIFPDKPVTLRPAETRMGSGKGSPEYWVAVVKPGRILYEMGGVTENIARRAISLAASKMPIRTQFIIS</sequence>
<accession>Q8S8V6</accession>
<dbReference type="EMBL" id="AJ316582">
    <property type="protein sequence ID" value="CAC88081.1"/>
    <property type="molecule type" value="Genomic_DNA"/>
</dbReference>
<dbReference type="RefSeq" id="NP_783268.1">
    <property type="nucleotide sequence ID" value="NC_004561.1"/>
</dbReference>
<dbReference type="SMR" id="Q8S8V6"/>
<dbReference type="GeneID" id="806502"/>
<dbReference type="GO" id="GO:0009507">
    <property type="term" value="C:chloroplast"/>
    <property type="evidence" value="ECO:0007669"/>
    <property type="project" value="UniProtKB-SubCell"/>
</dbReference>
<dbReference type="GO" id="GO:0005762">
    <property type="term" value="C:mitochondrial large ribosomal subunit"/>
    <property type="evidence" value="ECO:0007669"/>
    <property type="project" value="TreeGrafter"/>
</dbReference>
<dbReference type="GO" id="GO:0019843">
    <property type="term" value="F:rRNA binding"/>
    <property type="evidence" value="ECO:0007669"/>
    <property type="project" value="InterPro"/>
</dbReference>
<dbReference type="GO" id="GO:0003735">
    <property type="term" value="F:structural constituent of ribosome"/>
    <property type="evidence" value="ECO:0007669"/>
    <property type="project" value="InterPro"/>
</dbReference>
<dbReference type="GO" id="GO:0032543">
    <property type="term" value="P:mitochondrial translation"/>
    <property type="evidence" value="ECO:0007669"/>
    <property type="project" value="TreeGrafter"/>
</dbReference>
<dbReference type="CDD" id="cd01433">
    <property type="entry name" value="Ribosomal_L16_L10e"/>
    <property type="match status" value="1"/>
</dbReference>
<dbReference type="FunFam" id="3.90.1170.10:FF:000001">
    <property type="entry name" value="50S ribosomal protein L16"/>
    <property type="match status" value="1"/>
</dbReference>
<dbReference type="Gene3D" id="3.90.1170.10">
    <property type="entry name" value="Ribosomal protein L10e/L16"/>
    <property type="match status" value="1"/>
</dbReference>
<dbReference type="HAMAP" id="MF_01342">
    <property type="entry name" value="Ribosomal_uL16"/>
    <property type="match status" value="1"/>
</dbReference>
<dbReference type="InterPro" id="IPR047873">
    <property type="entry name" value="Ribosomal_uL16"/>
</dbReference>
<dbReference type="InterPro" id="IPR000114">
    <property type="entry name" value="Ribosomal_uL16_bact-type"/>
</dbReference>
<dbReference type="InterPro" id="IPR020798">
    <property type="entry name" value="Ribosomal_uL16_CS"/>
</dbReference>
<dbReference type="InterPro" id="IPR016180">
    <property type="entry name" value="Ribosomal_uL16_dom"/>
</dbReference>
<dbReference type="InterPro" id="IPR036920">
    <property type="entry name" value="Ribosomal_uL16_sf"/>
</dbReference>
<dbReference type="NCBIfam" id="TIGR01164">
    <property type="entry name" value="rplP_bact"/>
    <property type="match status" value="1"/>
</dbReference>
<dbReference type="PANTHER" id="PTHR12220">
    <property type="entry name" value="50S/60S RIBOSOMAL PROTEIN L16"/>
    <property type="match status" value="1"/>
</dbReference>
<dbReference type="PANTHER" id="PTHR12220:SF13">
    <property type="entry name" value="LARGE RIBOSOMAL SUBUNIT PROTEIN UL16M"/>
    <property type="match status" value="1"/>
</dbReference>
<dbReference type="Pfam" id="PF00252">
    <property type="entry name" value="Ribosomal_L16"/>
    <property type="match status" value="1"/>
</dbReference>
<dbReference type="PRINTS" id="PR00060">
    <property type="entry name" value="RIBOSOMALL16"/>
</dbReference>
<dbReference type="SUPFAM" id="SSF54686">
    <property type="entry name" value="Ribosomal protein L16p/L10e"/>
    <property type="match status" value="1"/>
</dbReference>
<dbReference type="PROSITE" id="PS00586">
    <property type="entry name" value="RIBOSOMAL_L16_1"/>
    <property type="match status" value="1"/>
</dbReference>
<dbReference type="PROSITE" id="PS00701">
    <property type="entry name" value="RIBOSOMAL_L16_2"/>
    <property type="match status" value="1"/>
</dbReference>
<keyword id="KW-0150">Chloroplast</keyword>
<keyword id="KW-0934">Plastid</keyword>
<keyword id="KW-0687">Ribonucleoprotein</keyword>
<keyword id="KW-0689">Ribosomal protein</keyword>
<protein>
    <recommendedName>
        <fullName evidence="1">Large ribosomal subunit protein uL16c</fullName>
    </recommendedName>
    <alternativeName>
        <fullName evidence="2">50S ribosomal protein L16, chloroplastic</fullName>
    </alternativeName>
</protein>